<reference key="1">
    <citation type="submission" date="2009-05" db="EMBL/GenBank/DDBJ databases">
        <title>Complete sequence of Tolumonas auensis DSM 9187.</title>
        <authorList>
            <consortium name="US DOE Joint Genome Institute"/>
            <person name="Lucas S."/>
            <person name="Copeland A."/>
            <person name="Lapidus A."/>
            <person name="Glavina del Rio T."/>
            <person name="Tice H."/>
            <person name="Bruce D."/>
            <person name="Goodwin L."/>
            <person name="Pitluck S."/>
            <person name="Chertkov O."/>
            <person name="Brettin T."/>
            <person name="Detter J.C."/>
            <person name="Han C."/>
            <person name="Larimer F."/>
            <person name="Land M."/>
            <person name="Hauser L."/>
            <person name="Kyrpides N."/>
            <person name="Mikhailova N."/>
            <person name="Spring S."/>
            <person name="Beller H."/>
        </authorList>
    </citation>
    <scope>NUCLEOTIDE SEQUENCE [LARGE SCALE GENOMIC DNA]</scope>
    <source>
        <strain>DSM 9187 / NBRC 110442 / TA 4</strain>
    </source>
</reference>
<dbReference type="EMBL" id="CP001616">
    <property type="protein sequence ID" value="ACQ93338.1"/>
    <property type="molecule type" value="Genomic_DNA"/>
</dbReference>
<dbReference type="RefSeq" id="WP_015878809.1">
    <property type="nucleotide sequence ID" value="NC_012691.1"/>
</dbReference>
<dbReference type="SMR" id="C4LFH1"/>
<dbReference type="STRING" id="595494.Tola_1728"/>
<dbReference type="KEGG" id="tau:Tola_1728"/>
<dbReference type="eggNOG" id="COG0291">
    <property type="taxonomic scope" value="Bacteria"/>
</dbReference>
<dbReference type="HOGENOM" id="CLU_169643_1_1_6"/>
<dbReference type="Proteomes" id="UP000009073">
    <property type="component" value="Chromosome"/>
</dbReference>
<dbReference type="GO" id="GO:0022625">
    <property type="term" value="C:cytosolic large ribosomal subunit"/>
    <property type="evidence" value="ECO:0007669"/>
    <property type="project" value="TreeGrafter"/>
</dbReference>
<dbReference type="GO" id="GO:0003735">
    <property type="term" value="F:structural constituent of ribosome"/>
    <property type="evidence" value="ECO:0007669"/>
    <property type="project" value="InterPro"/>
</dbReference>
<dbReference type="GO" id="GO:0006412">
    <property type="term" value="P:translation"/>
    <property type="evidence" value="ECO:0007669"/>
    <property type="project" value="UniProtKB-UniRule"/>
</dbReference>
<dbReference type="FunFam" id="4.10.410.60:FF:000001">
    <property type="entry name" value="50S ribosomal protein L35"/>
    <property type="match status" value="1"/>
</dbReference>
<dbReference type="Gene3D" id="4.10.410.60">
    <property type="match status" value="1"/>
</dbReference>
<dbReference type="HAMAP" id="MF_00514">
    <property type="entry name" value="Ribosomal_bL35"/>
    <property type="match status" value="1"/>
</dbReference>
<dbReference type="InterPro" id="IPR001706">
    <property type="entry name" value="Ribosomal_bL35"/>
</dbReference>
<dbReference type="InterPro" id="IPR021137">
    <property type="entry name" value="Ribosomal_bL35-like"/>
</dbReference>
<dbReference type="InterPro" id="IPR018265">
    <property type="entry name" value="Ribosomal_bL35_CS"/>
</dbReference>
<dbReference type="InterPro" id="IPR037229">
    <property type="entry name" value="Ribosomal_bL35_sf"/>
</dbReference>
<dbReference type="NCBIfam" id="TIGR00001">
    <property type="entry name" value="rpmI_bact"/>
    <property type="match status" value="1"/>
</dbReference>
<dbReference type="PANTHER" id="PTHR33343">
    <property type="entry name" value="54S RIBOSOMAL PROTEIN BL35M"/>
    <property type="match status" value="1"/>
</dbReference>
<dbReference type="PANTHER" id="PTHR33343:SF1">
    <property type="entry name" value="LARGE RIBOSOMAL SUBUNIT PROTEIN BL35M"/>
    <property type="match status" value="1"/>
</dbReference>
<dbReference type="Pfam" id="PF01632">
    <property type="entry name" value="Ribosomal_L35p"/>
    <property type="match status" value="1"/>
</dbReference>
<dbReference type="PRINTS" id="PR00064">
    <property type="entry name" value="RIBOSOMALL35"/>
</dbReference>
<dbReference type="SUPFAM" id="SSF143034">
    <property type="entry name" value="L35p-like"/>
    <property type="match status" value="1"/>
</dbReference>
<dbReference type="PROSITE" id="PS00936">
    <property type="entry name" value="RIBOSOMAL_L35"/>
    <property type="match status" value="1"/>
</dbReference>
<proteinExistence type="inferred from homology"/>
<sequence length="65" mass="7305">MPKMKTDRGAAKRFKKTGSGGFKCKHANKRHILTKKTTKRKRHLRAPGMVAKPDLARVSAMLPYA</sequence>
<organism>
    <name type="scientific">Tolumonas auensis (strain DSM 9187 / NBRC 110442 / TA 4)</name>
    <dbReference type="NCBI Taxonomy" id="595494"/>
    <lineage>
        <taxon>Bacteria</taxon>
        <taxon>Pseudomonadati</taxon>
        <taxon>Pseudomonadota</taxon>
        <taxon>Gammaproteobacteria</taxon>
        <taxon>Aeromonadales</taxon>
        <taxon>Aeromonadaceae</taxon>
        <taxon>Tolumonas</taxon>
    </lineage>
</organism>
<gene>
    <name evidence="1" type="primary">rpmI</name>
    <name type="ordered locus">Tola_1728</name>
</gene>
<protein>
    <recommendedName>
        <fullName evidence="1">Large ribosomal subunit protein bL35</fullName>
    </recommendedName>
    <alternativeName>
        <fullName evidence="3">50S ribosomal protein L35</fullName>
    </alternativeName>
</protein>
<evidence type="ECO:0000255" key="1">
    <source>
        <dbReference type="HAMAP-Rule" id="MF_00514"/>
    </source>
</evidence>
<evidence type="ECO:0000256" key="2">
    <source>
        <dbReference type="SAM" id="MobiDB-lite"/>
    </source>
</evidence>
<evidence type="ECO:0000305" key="3"/>
<comment type="similarity">
    <text evidence="1">Belongs to the bacterial ribosomal protein bL35 family.</text>
</comment>
<accession>C4LFH1</accession>
<name>RL35_TOLAT</name>
<keyword id="KW-1185">Reference proteome</keyword>
<keyword id="KW-0687">Ribonucleoprotein</keyword>
<keyword id="KW-0689">Ribosomal protein</keyword>
<feature type="chain" id="PRO_1000211715" description="Large ribosomal subunit protein bL35">
    <location>
        <begin position="1"/>
        <end position="65"/>
    </location>
</feature>
<feature type="region of interest" description="Disordered" evidence="2">
    <location>
        <begin position="1"/>
        <end position="24"/>
    </location>
</feature>
<feature type="compositionally biased region" description="Basic and acidic residues" evidence="2">
    <location>
        <begin position="1"/>
        <end position="10"/>
    </location>
</feature>